<reference key="1">
    <citation type="journal article" date="2006" name="Proc. Natl. Acad. Sci. U.S.A.">
        <title>Burkholderia xenovorans LB400 harbors a multi-replicon, 9.73-Mbp genome shaped for versatility.</title>
        <authorList>
            <person name="Chain P.S.G."/>
            <person name="Denef V.J."/>
            <person name="Konstantinidis K.T."/>
            <person name="Vergez L.M."/>
            <person name="Agullo L."/>
            <person name="Reyes V.L."/>
            <person name="Hauser L."/>
            <person name="Cordova M."/>
            <person name="Gomez L."/>
            <person name="Gonzalez M."/>
            <person name="Land M."/>
            <person name="Lao V."/>
            <person name="Larimer F."/>
            <person name="LiPuma J.J."/>
            <person name="Mahenthiralingam E."/>
            <person name="Malfatti S.A."/>
            <person name="Marx C.J."/>
            <person name="Parnell J.J."/>
            <person name="Ramette A."/>
            <person name="Richardson P."/>
            <person name="Seeger M."/>
            <person name="Smith D."/>
            <person name="Spilker T."/>
            <person name="Sul W.J."/>
            <person name="Tsoi T.V."/>
            <person name="Ulrich L.E."/>
            <person name="Zhulin I.B."/>
            <person name="Tiedje J.M."/>
        </authorList>
    </citation>
    <scope>NUCLEOTIDE SEQUENCE [LARGE SCALE GENOMIC DNA]</scope>
    <source>
        <strain>LB400</strain>
    </source>
</reference>
<dbReference type="EMBL" id="CP000270">
    <property type="protein sequence ID" value="ABE32611.1"/>
    <property type="molecule type" value="Genomic_DNA"/>
</dbReference>
<dbReference type="RefSeq" id="WP_007180130.1">
    <property type="nucleotide sequence ID" value="NZ_CP008760.1"/>
</dbReference>
<dbReference type="SMR" id="Q13TH8"/>
<dbReference type="STRING" id="266265.Bxe_A0322"/>
<dbReference type="GeneID" id="97311000"/>
<dbReference type="KEGG" id="bxb:DR64_2492"/>
<dbReference type="KEGG" id="bxe:Bxe_A0322"/>
<dbReference type="eggNOG" id="COG0255">
    <property type="taxonomic scope" value="Bacteria"/>
</dbReference>
<dbReference type="OrthoDB" id="9815192at2"/>
<dbReference type="Proteomes" id="UP000001817">
    <property type="component" value="Chromosome 1"/>
</dbReference>
<dbReference type="GO" id="GO:0022625">
    <property type="term" value="C:cytosolic large ribosomal subunit"/>
    <property type="evidence" value="ECO:0007669"/>
    <property type="project" value="TreeGrafter"/>
</dbReference>
<dbReference type="GO" id="GO:0003735">
    <property type="term" value="F:structural constituent of ribosome"/>
    <property type="evidence" value="ECO:0007669"/>
    <property type="project" value="InterPro"/>
</dbReference>
<dbReference type="GO" id="GO:0006412">
    <property type="term" value="P:translation"/>
    <property type="evidence" value="ECO:0007669"/>
    <property type="project" value="UniProtKB-UniRule"/>
</dbReference>
<dbReference type="CDD" id="cd00427">
    <property type="entry name" value="Ribosomal_L29_HIP"/>
    <property type="match status" value="1"/>
</dbReference>
<dbReference type="FunFam" id="1.10.287.310:FF:000001">
    <property type="entry name" value="50S ribosomal protein L29"/>
    <property type="match status" value="1"/>
</dbReference>
<dbReference type="Gene3D" id="6.10.140.1970">
    <property type="match status" value="1"/>
</dbReference>
<dbReference type="HAMAP" id="MF_00374">
    <property type="entry name" value="Ribosomal_uL29"/>
    <property type="match status" value="1"/>
</dbReference>
<dbReference type="InterPro" id="IPR050063">
    <property type="entry name" value="Ribosomal_protein_uL29"/>
</dbReference>
<dbReference type="InterPro" id="IPR001854">
    <property type="entry name" value="Ribosomal_uL29"/>
</dbReference>
<dbReference type="InterPro" id="IPR018254">
    <property type="entry name" value="Ribosomal_uL29_CS"/>
</dbReference>
<dbReference type="InterPro" id="IPR036049">
    <property type="entry name" value="Ribosomal_uL29_sf"/>
</dbReference>
<dbReference type="NCBIfam" id="TIGR00012">
    <property type="entry name" value="L29"/>
    <property type="match status" value="1"/>
</dbReference>
<dbReference type="PANTHER" id="PTHR10916">
    <property type="entry name" value="60S RIBOSOMAL PROTEIN L35/50S RIBOSOMAL PROTEIN L29"/>
    <property type="match status" value="1"/>
</dbReference>
<dbReference type="PANTHER" id="PTHR10916:SF0">
    <property type="entry name" value="LARGE RIBOSOMAL SUBUNIT PROTEIN UL29C"/>
    <property type="match status" value="1"/>
</dbReference>
<dbReference type="Pfam" id="PF00831">
    <property type="entry name" value="Ribosomal_L29"/>
    <property type="match status" value="1"/>
</dbReference>
<dbReference type="SUPFAM" id="SSF46561">
    <property type="entry name" value="Ribosomal protein L29 (L29p)"/>
    <property type="match status" value="1"/>
</dbReference>
<dbReference type="PROSITE" id="PS00579">
    <property type="entry name" value="RIBOSOMAL_L29"/>
    <property type="match status" value="1"/>
</dbReference>
<accession>Q13TH8</accession>
<sequence>MKASELHQKDQAALNKELSDLLKAQFGLRMQLATQQLTNTSQLKKVRRDIARVRTVLTEKANQK</sequence>
<comment type="similarity">
    <text evidence="1">Belongs to the universal ribosomal protein uL29 family.</text>
</comment>
<proteinExistence type="inferred from homology"/>
<feature type="chain" id="PRO_1000007446" description="Large ribosomal subunit protein uL29">
    <location>
        <begin position="1"/>
        <end position="64"/>
    </location>
</feature>
<evidence type="ECO:0000255" key="1">
    <source>
        <dbReference type="HAMAP-Rule" id="MF_00374"/>
    </source>
</evidence>
<evidence type="ECO:0000305" key="2"/>
<protein>
    <recommendedName>
        <fullName evidence="1">Large ribosomal subunit protein uL29</fullName>
    </recommendedName>
    <alternativeName>
        <fullName evidence="2">50S ribosomal protein L29</fullName>
    </alternativeName>
</protein>
<keyword id="KW-1185">Reference proteome</keyword>
<keyword id="KW-0687">Ribonucleoprotein</keyword>
<keyword id="KW-0689">Ribosomal protein</keyword>
<name>RL29_PARXL</name>
<gene>
    <name evidence="1" type="primary">rpmC</name>
    <name type="ordered locus">Bxeno_A4073</name>
    <name type="ORF">Bxe_A0322</name>
</gene>
<organism>
    <name type="scientific">Paraburkholderia xenovorans (strain LB400)</name>
    <dbReference type="NCBI Taxonomy" id="266265"/>
    <lineage>
        <taxon>Bacteria</taxon>
        <taxon>Pseudomonadati</taxon>
        <taxon>Pseudomonadota</taxon>
        <taxon>Betaproteobacteria</taxon>
        <taxon>Burkholderiales</taxon>
        <taxon>Burkholderiaceae</taxon>
        <taxon>Paraburkholderia</taxon>
    </lineage>
</organism>